<organism>
    <name type="scientific">Chlamydia pneumoniae</name>
    <name type="common">Chlamydophila pneumoniae</name>
    <dbReference type="NCBI Taxonomy" id="83558"/>
    <lineage>
        <taxon>Bacteria</taxon>
        <taxon>Pseudomonadati</taxon>
        <taxon>Chlamydiota</taxon>
        <taxon>Chlamydiia</taxon>
        <taxon>Chlamydiales</taxon>
        <taxon>Chlamydiaceae</taxon>
        <taxon>Chlamydia/Chlamydophila group</taxon>
        <taxon>Chlamydia</taxon>
    </lineage>
</organism>
<name>HCT2_CHLPN</name>
<feature type="chain" id="PRO_0000196021" description="Histone H1-like protein HC2">
    <location>
        <begin position="1"/>
        <end position="172"/>
    </location>
</feature>
<feature type="region of interest" description="Disordered" evidence="1">
    <location>
        <begin position="1"/>
        <end position="77"/>
    </location>
</feature>
<feature type="compositionally biased region" description="Basic residues" evidence="1">
    <location>
        <begin position="8"/>
        <end position="77"/>
    </location>
</feature>
<keyword id="KW-0238">DNA-binding</keyword>
<keyword id="KW-0677">Repeat</keyword>
<proteinExistence type="evidence at transcript level"/>
<dbReference type="EMBL" id="AE001363">
    <property type="protein sequence ID" value="AAD18528.1"/>
    <property type="molecule type" value="Genomic_DNA"/>
</dbReference>
<dbReference type="EMBL" id="AE002161">
    <property type="protein sequence ID" value="AAF38220.1"/>
    <property type="molecule type" value="Genomic_DNA"/>
</dbReference>
<dbReference type="EMBL" id="BA000008">
    <property type="protein sequence ID" value="BAA98592.1"/>
    <property type="molecule type" value="Genomic_DNA"/>
</dbReference>
<dbReference type="EMBL" id="AE009440">
    <property type="protein sequence ID" value="AAP98327.1"/>
    <property type="molecule type" value="Genomic_DNA"/>
</dbReference>
<dbReference type="PIR" id="F72083">
    <property type="entry name" value="F72083"/>
</dbReference>
<dbReference type="PIR" id="F86538">
    <property type="entry name" value="F86538"/>
</dbReference>
<dbReference type="RefSeq" id="NP_224584.1">
    <property type="nucleotide sequence ID" value="NC_000922.1"/>
</dbReference>
<dbReference type="RefSeq" id="WP_010883027.1">
    <property type="nucleotide sequence ID" value="NZ_LN847257.1"/>
</dbReference>
<dbReference type="GeneID" id="45050431"/>
<dbReference type="KEGG" id="cpa:CP_0371"/>
<dbReference type="KEGG" id="cpj:hctB"/>
<dbReference type="KEGG" id="cpn:CPn_0384"/>
<dbReference type="KEGG" id="cpt:CpB0396"/>
<dbReference type="PATRIC" id="fig|115713.3.peg.426"/>
<dbReference type="eggNOG" id="ENOG502ZCZQ">
    <property type="taxonomic scope" value="Bacteria"/>
</dbReference>
<dbReference type="HOGENOM" id="CLU_101293_0_0_0"/>
<dbReference type="OrthoDB" id="19230at2"/>
<dbReference type="Proteomes" id="UP000000583">
    <property type="component" value="Chromosome"/>
</dbReference>
<dbReference type="Proteomes" id="UP000000801">
    <property type="component" value="Chromosome"/>
</dbReference>
<dbReference type="GO" id="GO:0003677">
    <property type="term" value="F:DNA binding"/>
    <property type="evidence" value="ECO:0007669"/>
    <property type="project" value="UniProtKB-KW"/>
</dbReference>
<dbReference type="GO" id="GO:0030527">
    <property type="term" value="F:structural constituent of chromatin"/>
    <property type="evidence" value="ECO:0007669"/>
    <property type="project" value="InterPro"/>
</dbReference>
<dbReference type="GO" id="GO:0030261">
    <property type="term" value="P:chromosome condensation"/>
    <property type="evidence" value="ECO:0007669"/>
    <property type="project" value="InterPro"/>
</dbReference>
<dbReference type="InterPro" id="IPR009970">
    <property type="entry name" value="HC2"/>
</dbReference>
<dbReference type="Pfam" id="PF07382">
    <property type="entry name" value="HC2"/>
    <property type="match status" value="1"/>
</dbReference>
<gene>
    <name type="primary">hctB</name>
    <name type="ordered locus">CPn_0384</name>
    <name type="ordered locus">CP_0371</name>
    <name type="ordered locus">CpB0396</name>
</gene>
<evidence type="ECO:0000256" key="1">
    <source>
        <dbReference type="SAM" id="MobiDB-lite"/>
    </source>
</evidence>
<evidence type="ECO:0000305" key="2"/>
<protein>
    <recommendedName>
        <fullName>Histone H1-like protein HC2</fullName>
    </recommendedName>
    <alternativeName>
        <fullName>HC2 nucleoprotein</fullName>
    </alternativeName>
</protein>
<comment type="function">
    <text>Might have a role in establishing the nucleoid structure of elementary bodies.</text>
</comment>
<comment type="developmental stage">
    <text>Specific to the EB (elementary body) form in the life cycle of chlamydiae.</text>
</comment>
<comment type="similarity">
    <text evidence="2">Belongs to the histone H1/H5 family. HCT subfamily.</text>
</comment>
<reference key="1">
    <citation type="journal article" date="1999" name="Nat. Genet.">
        <title>Comparative genomes of Chlamydia pneumoniae and C. trachomatis.</title>
        <authorList>
            <person name="Kalman S."/>
            <person name="Mitchell W.P."/>
            <person name="Marathe R."/>
            <person name="Lammel C.J."/>
            <person name="Fan J."/>
            <person name="Hyman R.W."/>
            <person name="Olinger L."/>
            <person name="Grimwood J."/>
            <person name="Davis R.W."/>
            <person name="Stephens R.S."/>
        </authorList>
    </citation>
    <scope>NUCLEOTIDE SEQUENCE [LARGE SCALE GENOMIC DNA]</scope>
    <source>
        <strain>CWL029</strain>
    </source>
</reference>
<reference key="2">
    <citation type="journal article" date="2000" name="Nucleic Acids Res.">
        <title>Genome sequences of Chlamydia trachomatis MoPn and Chlamydia pneumoniae AR39.</title>
        <authorList>
            <person name="Read T.D."/>
            <person name="Brunham R.C."/>
            <person name="Shen C."/>
            <person name="Gill S.R."/>
            <person name="Heidelberg J.F."/>
            <person name="White O."/>
            <person name="Hickey E.K."/>
            <person name="Peterson J.D."/>
            <person name="Utterback T.R."/>
            <person name="Berry K.J."/>
            <person name="Bass S."/>
            <person name="Linher K.D."/>
            <person name="Weidman J.F."/>
            <person name="Khouri H.M."/>
            <person name="Craven B."/>
            <person name="Bowman C."/>
            <person name="Dodson R.J."/>
            <person name="Gwinn M.L."/>
            <person name="Nelson W.C."/>
            <person name="DeBoy R.T."/>
            <person name="Kolonay J.F."/>
            <person name="McClarty G."/>
            <person name="Salzberg S.L."/>
            <person name="Eisen J.A."/>
            <person name="Fraser C.M."/>
        </authorList>
    </citation>
    <scope>NUCLEOTIDE SEQUENCE [LARGE SCALE GENOMIC DNA]</scope>
    <source>
        <strain>AR39</strain>
    </source>
</reference>
<reference key="3">
    <citation type="journal article" date="2000" name="Nucleic Acids Res.">
        <title>Comparison of whole genome sequences of Chlamydia pneumoniae J138 from Japan and CWL029 from USA.</title>
        <authorList>
            <person name="Shirai M."/>
            <person name="Hirakawa H."/>
            <person name="Kimoto M."/>
            <person name="Tabuchi M."/>
            <person name="Kishi F."/>
            <person name="Ouchi K."/>
            <person name="Shiba T."/>
            <person name="Ishii K."/>
            <person name="Hattori M."/>
            <person name="Kuhara S."/>
            <person name="Nakazawa T."/>
        </authorList>
    </citation>
    <scope>NUCLEOTIDE SEQUENCE [LARGE SCALE GENOMIC DNA]</scope>
    <source>
        <strain>J138</strain>
    </source>
</reference>
<reference key="4">
    <citation type="submission" date="2002-05" db="EMBL/GenBank/DDBJ databases">
        <title>The genome sequence of Chlamydia pneumoniae TW183 and comparison with other Chlamydia strains based on whole genome sequence analysis.</title>
        <authorList>
            <person name="Geng M.M."/>
            <person name="Schuhmacher A."/>
            <person name="Muehldorfer I."/>
            <person name="Bensch K.W."/>
            <person name="Schaefer K.P."/>
            <person name="Schneider S."/>
            <person name="Pohl T."/>
            <person name="Essig A."/>
            <person name="Marre R."/>
            <person name="Melchers K."/>
        </authorList>
    </citation>
    <scope>NUCLEOTIDE SEQUENCE [LARGE SCALE GENOMIC DNA]</scope>
    <source>
        <strain>TW-183</strain>
    </source>
</reference>
<accession>Q9Z8F9</accession>
<accession>Q9JQ36</accession>
<sequence>MIGAQKKQSGKKTASRAVRKPAKKVAAKRTVKKATVRKTAVKKPAVRKTAAKKTVAKKTTAKRTVRKTVAKKPAVKKVAAKRVVKKTVAKKTTAKRAVRKTVAKKPVARKTTVAKGSPKKAAACALACHKNHKHTSSCKRVCSSTATRKHGSKSRVRTAHGWRHQLIKMMSR</sequence>